<sequence length="258" mass="29105">MDGGSGGPYTSRTAEEVFRDFRGRRAGMIKALTTDVEKFYQLCDPEKENLCLYGYPNETWEVTLPAEEVPPEIPEPALGINFARDGMNEKDWLALVAVHSDSWLLAVAFYFAARFGFDKEARRRLFNMINNLPTIFEVVTGAAKKQTKEKAPNSTNKPNKPSSKMQPRPESHSKAPKPPAPPKDDDESGDEYADEEEEERDNTLCGSCGTNDGKDEFWICCDSCERWYHGKCVKITPARAEHIKHYKCPDCGNKRARA</sequence>
<proteinExistence type="inferred from homology"/>
<comment type="function">
    <text evidence="1">Histone-binding component that specifically recognizes H3 tails trimethylated on 'Lys-4' (H3K4me3), which mark transcription start sites of virtually all active genes.</text>
</comment>
<comment type="subcellular location">
    <subcellularLocation>
        <location evidence="1">Nucleus</location>
    </subcellularLocation>
</comment>
<comment type="domain">
    <text evidence="1">The PHD-type zinc finger mediates the binding to H3K4me3.</text>
</comment>
<comment type="similarity">
    <text evidence="4">Belongs to the Alfin family.</text>
</comment>
<comment type="caution">
    <text evidence="4">Lacks the Tyr (here Asp-212), a conserved feature of the aromatic cage required for the interaction with histone H3K4me3/2.</text>
</comment>
<reference key="1">
    <citation type="journal article" date="2005" name="PLoS Biol.">
        <title>The genomes of Oryza sativa: a history of duplications.</title>
        <authorList>
            <person name="Yu J."/>
            <person name="Wang J."/>
            <person name="Lin W."/>
            <person name="Li S."/>
            <person name="Li H."/>
            <person name="Zhou J."/>
            <person name="Ni P."/>
            <person name="Dong W."/>
            <person name="Hu S."/>
            <person name="Zeng C."/>
            <person name="Zhang J."/>
            <person name="Zhang Y."/>
            <person name="Li R."/>
            <person name="Xu Z."/>
            <person name="Li S."/>
            <person name="Li X."/>
            <person name="Zheng H."/>
            <person name="Cong L."/>
            <person name="Lin L."/>
            <person name="Yin J."/>
            <person name="Geng J."/>
            <person name="Li G."/>
            <person name="Shi J."/>
            <person name="Liu J."/>
            <person name="Lv H."/>
            <person name="Li J."/>
            <person name="Wang J."/>
            <person name="Deng Y."/>
            <person name="Ran L."/>
            <person name="Shi X."/>
            <person name="Wang X."/>
            <person name="Wu Q."/>
            <person name="Li C."/>
            <person name="Ren X."/>
            <person name="Wang J."/>
            <person name="Wang X."/>
            <person name="Li D."/>
            <person name="Liu D."/>
            <person name="Zhang X."/>
            <person name="Ji Z."/>
            <person name="Zhao W."/>
            <person name="Sun Y."/>
            <person name="Zhang Z."/>
            <person name="Bao J."/>
            <person name="Han Y."/>
            <person name="Dong L."/>
            <person name="Ji J."/>
            <person name="Chen P."/>
            <person name="Wu S."/>
            <person name="Liu J."/>
            <person name="Xiao Y."/>
            <person name="Bu D."/>
            <person name="Tan J."/>
            <person name="Yang L."/>
            <person name="Ye C."/>
            <person name="Zhang J."/>
            <person name="Xu J."/>
            <person name="Zhou Y."/>
            <person name="Yu Y."/>
            <person name="Zhang B."/>
            <person name="Zhuang S."/>
            <person name="Wei H."/>
            <person name="Liu B."/>
            <person name="Lei M."/>
            <person name="Yu H."/>
            <person name="Li Y."/>
            <person name="Xu H."/>
            <person name="Wei S."/>
            <person name="He X."/>
            <person name="Fang L."/>
            <person name="Zhang Z."/>
            <person name="Zhang Y."/>
            <person name="Huang X."/>
            <person name="Su Z."/>
            <person name="Tong W."/>
            <person name="Li J."/>
            <person name="Tong Z."/>
            <person name="Li S."/>
            <person name="Ye J."/>
            <person name="Wang L."/>
            <person name="Fang L."/>
            <person name="Lei T."/>
            <person name="Chen C.-S."/>
            <person name="Chen H.-C."/>
            <person name="Xu Z."/>
            <person name="Li H."/>
            <person name="Huang H."/>
            <person name="Zhang F."/>
            <person name="Xu H."/>
            <person name="Li N."/>
            <person name="Zhao C."/>
            <person name="Li S."/>
            <person name="Dong L."/>
            <person name="Huang Y."/>
            <person name="Li L."/>
            <person name="Xi Y."/>
            <person name="Qi Q."/>
            <person name="Li W."/>
            <person name="Zhang B."/>
            <person name="Hu W."/>
            <person name="Zhang Y."/>
            <person name="Tian X."/>
            <person name="Jiao Y."/>
            <person name="Liang X."/>
            <person name="Jin J."/>
            <person name="Gao L."/>
            <person name="Zheng W."/>
            <person name="Hao B."/>
            <person name="Liu S.-M."/>
            <person name="Wang W."/>
            <person name="Yuan L."/>
            <person name="Cao M."/>
            <person name="McDermott J."/>
            <person name="Samudrala R."/>
            <person name="Wang J."/>
            <person name="Wong G.K.-S."/>
            <person name="Yang H."/>
        </authorList>
    </citation>
    <scope>NUCLEOTIDE SEQUENCE [LARGE SCALE GENOMIC DNA]</scope>
    <source>
        <strain>cv. 93-11</strain>
    </source>
</reference>
<dbReference type="EMBL" id="CM000130">
    <property type="protein sequence ID" value="EAY98078.1"/>
    <property type="molecule type" value="Genomic_DNA"/>
</dbReference>
<dbReference type="SMR" id="A2Y4R8"/>
<dbReference type="STRING" id="39946.A2Y4R8"/>
<dbReference type="EnsemblPlants" id="BGIOSGA019887-TA">
    <property type="protein sequence ID" value="BGIOSGA019887-PA"/>
    <property type="gene ID" value="BGIOSGA019887"/>
</dbReference>
<dbReference type="EnsemblPlants" id="OsGoSa_05g0017360.01">
    <property type="protein sequence ID" value="OsGoSa_05g0017360.01"/>
    <property type="gene ID" value="OsGoSa_05g0017360"/>
</dbReference>
<dbReference type="EnsemblPlants" id="OsIR64_05g0016990.01">
    <property type="protein sequence ID" value="OsIR64_05g0016990.01"/>
    <property type="gene ID" value="OsIR64_05g0016990"/>
</dbReference>
<dbReference type="EnsemblPlants" id="OsKYG_05g0017230.01">
    <property type="protein sequence ID" value="OsKYG_05g0017230.01"/>
    <property type="gene ID" value="OsKYG_05g0017230"/>
</dbReference>
<dbReference type="EnsemblPlants" id="OsLaMu_05g0017430.01">
    <property type="protein sequence ID" value="OsLaMu_05g0017430.01"/>
    <property type="gene ID" value="OsLaMu_05g0017430"/>
</dbReference>
<dbReference type="EnsemblPlants" id="OsLima_05g0017340.01">
    <property type="protein sequence ID" value="OsLima_05g0017340.01"/>
    <property type="gene ID" value="OsLima_05g0017340"/>
</dbReference>
<dbReference type="EnsemblPlants" id="OsLiXu_05g0017380.01">
    <property type="protein sequence ID" value="OsLiXu_05g0017380.01"/>
    <property type="gene ID" value="OsLiXu_05g0017380"/>
</dbReference>
<dbReference type="EnsemblPlants" id="OsMH63_05G017340_01">
    <property type="protein sequence ID" value="OsMH63_05G017340_01"/>
    <property type="gene ID" value="OsMH63_05G017340"/>
</dbReference>
<dbReference type="EnsemblPlants" id="OsPr106_05g0017500.01">
    <property type="protein sequence ID" value="OsPr106_05g0017500.01"/>
    <property type="gene ID" value="OsPr106_05g0017500"/>
</dbReference>
<dbReference type="EnsemblPlants" id="OsZS97_05G017590_01">
    <property type="protein sequence ID" value="OsZS97_05G017590_01"/>
    <property type="gene ID" value="OsZS97_05G017590"/>
</dbReference>
<dbReference type="Gramene" id="BGIOSGA019887-TA">
    <property type="protein sequence ID" value="BGIOSGA019887-PA"/>
    <property type="gene ID" value="BGIOSGA019887"/>
</dbReference>
<dbReference type="Gramene" id="OsGoSa_05g0017360.01">
    <property type="protein sequence ID" value="OsGoSa_05g0017360.01"/>
    <property type="gene ID" value="OsGoSa_05g0017360"/>
</dbReference>
<dbReference type="Gramene" id="OsIR64_05g0016990.01">
    <property type="protein sequence ID" value="OsIR64_05g0016990.01"/>
    <property type="gene ID" value="OsIR64_05g0016990"/>
</dbReference>
<dbReference type="Gramene" id="OsKYG_05g0017230.01">
    <property type="protein sequence ID" value="OsKYG_05g0017230.01"/>
    <property type="gene ID" value="OsKYG_05g0017230"/>
</dbReference>
<dbReference type="Gramene" id="OsLaMu_05g0017430.01">
    <property type="protein sequence ID" value="OsLaMu_05g0017430.01"/>
    <property type="gene ID" value="OsLaMu_05g0017430"/>
</dbReference>
<dbReference type="Gramene" id="OsLima_05g0017340.01">
    <property type="protein sequence ID" value="OsLima_05g0017340.01"/>
    <property type="gene ID" value="OsLima_05g0017340"/>
</dbReference>
<dbReference type="Gramene" id="OsLiXu_05g0017380.01">
    <property type="protein sequence ID" value="OsLiXu_05g0017380.01"/>
    <property type="gene ID" value="OsLiXu_05g0017380"/>
</dbReference>
<dbReference type="Gramene" id="OsMH63_05G017340_01">
    <property type="protein sequence ID" value="OsMH63_05G017340_01"/>
    <property type="gene ID" value="OsMH63_05G017340"/>
</dbReference>
<dbReference type="Gramene" id="OsPr106_05g0017500.01">
    <property type="protein sequence ID" value="OsPr106_05g0017500.01"/>
    <property type="gene ID" value="OsPr106_05g0017500"/>
</dbReference>
<dbReference type="Gramene" id="OsZS97_05G017590_01">
    <property type="protein sequence ID" value="OsZS97_05G017590_01"/>
    <property type="gene ID" value="OsZS97_05G017590"/>
</dbReference>
<dbReference type="HOGENOM" id="CLU_058315_0_0_1"/>
<dbReference type="OMA" id="QMPKEDE"/>
<dbReference type="OrthoDB" id="436852at2759"/>
<dbReference type="Proteomes" id="UP000007015">
    <property type="component" value="Chromosome 5"/>
</dbReference>
<dbReference type="GO" id="GO:0005634">
    <property type="term" value="C:nucleus"/>
    <property type="evidence" value="ECO:0007669"/>
    <property type="project" value="UniProtKB-SubCell"/>
</dbReference>
<dbReference type="GO" id="GO:0042393">
    <property type="term" value="F:histone binding"/>
    <property type="evidence" value="ECO:0007669"/>
    <property type="project" value="InterPro"/>
</dbReference>
<dbReference type="GO" id="GO:0000976">
    <property type="term" value="F:transcription cis-regulatory region binding"/>
    <property type="evidence" value="ECO:0007669"/>
    <property type="project" value="TreeGrafter"/>
</dbReference>
<dbReference type="GO" id="GO:0003712">
    <property type="term" value="F:transcription coregulator activity"/>
    <property type="evidence" value="ECO:0007669"/>
    <property type="project" value="TreeGrafter"/>
</dbReference>
<dbReference type="GO" id="GO:0008270">
    <property type="term" value="F:zinc ion binding"/>
    <property type="evidence" value="ECO:0007669"/>
    <property type="project" value="UniProtKB-KW"/>
</dbReference>
<dbReference type="GO" id="GO:0006325">
    <property type="term" value="P:chromatin organization"/>
    <property type="evidence" value="ECO:0007669"/>
    <property type="project" value="UniProtKB-KW"/>
</dbReference>
<dbReference type="GO" id="GO:0006355">
    <property type="term" value="P:regulation of DNA-templated transcription"/>
    <property type="evidence" value="ECO:0007669"/>
    <property type="project" value="InterPro"/>
</dbReference>
<dbReference type="CDD" id="cd15613">
    <property type="entry name" value="PHD_AL_plant"/>
    <property type="match status" value="1"/>
</dbReference>
<dbReference type="FunFam" id="3.30.40.10:FF:000306">
    <property type="entry name" value="PHD finger alfin-like protein"/>
    <property type="match status" value="1"/>
</dbReference>
<dbReference type="Gene3D" id="3.30.40.10">
    <property type="entry name" value="Zinc/RING finger domain, C3HC4 (zinc finger)"/>
    <property type="match status" value="1"/>
</dbReference>
<dbReference type="InterPro" id="IPR045104">
    <property type="entry name" value="Alfin"/>
</dbReference>
<dbReference type="InterPro" id="IPR021998">
    <property type="entry name" value="Alfin_N"/>
</dbReference>
<dbReference type="InterPro" id="IPR044104">
    <property type="entry name" value="PHD_AL_plant"/>
</dbReference>
<dbReference type="InterPro" id="IPR019786">
    <property type="entry name" value="Zinc_finger_PHD-type_CS"/>
</dbReference>
<dbReference type="InterPro" id="IPR011011">
    <property type="entry name" value="Znf_FYVE_PHD"/>
</dbReference>
<dbReference type="InterPro" id="IPR001965">
    <property type="entry name" value="Znf_PHD"/>
</dbReference>
<dbReference type="InterPro" id="IPR019787">
    <property type="entry name" value="Znf_PHD-finger"/>
</dbReference>
<dbReference type="InterPro" id="IPR013083">
    <property type="entry name" value="Znf_RING/FYVE/PHD"/>
</dbReference>
<dbReference type="PANTHER" id="PTHR12321">
    <property type="entry name" value="CPG BINDING PROTEIN"/>
    <property type="match status" value="1"/>
</dbReference>
<dbReference type="PANTHER" id="PTHR12321:SF165">
    <property type="entry name" value="PHD FINGER PROTEIN ALFIN-LIKE 5"/>
    <property type="match status" value="1"/>
</dbReference>
<dbReference type="Pfam" id="PF12165">
    <property type="entry name" value="Alfin"/>
    <property type="match status" value="1"/>
</dbReference>
<dbReference type="Pfam" id="PF00628">
    <property type="entry name" value="PHD"/>
    <property type="match status" value="1"/>
</dbReference>
<dbReference type="SMART" id="SM00249">
    <property type="entry name" value="PHD"/>
    <property type="match status" value="1"/>
</dbReference>
<dbReference type="SUPFAM" id="SSF57903">
    <property type="entry name" value="FYVE/PHD zinc finger"/>
    <property type="match status" value="1"/>
</dbReference>
<dbReference type="PROSITE" id="PS01359">
    <property type="entry name" value="ZF_PHD_1"/>
    <property type="match status" value="1"/>
</dbReference>
<dbReference type="PROSITE" id="PS50016">
    <property type="entry name" value="ZF_PHD_2"/>
    <property type="match status" value="1"/>
</dbReference>
<protein>
    <recommendedName>
        <fullName>PHD finger protein ALFIN-LIKE 5</fullName>
    </recommendedName>
</protein>
<gene>
    <name type="ORF">OsI_19996</name>
</gene>
<keyword id="KW-0156">Chromatin regulator</keyword>
<keyword id="KW-0479">Metal-binding</keyword>
<keyword id="KW-0539">Nucleus</keyword>
<keyword id="KW-1185">Reference proteome</keyword>
<keyword id="KW-0804">Transcription</keyword>
<keyword id="KW-0805">Transcription regulation</keyword>
<keyword id="KW-0862">Zinc</keyword>
<keyword id="KW-0863">Zinc-finger</keyword>
<name>ALFL5_ORYSI</name>
<accession>A2Y4R8</accession>
<feature type="chain" id="PRO_0000412944" description="PHD finger protein ALFIN-LIKE 5">
    <location>
        <begin position="1"/>
        <end position="258"/>
    </location>
</feature>
<feature type="zinc finger region" description="PHD-type" evidence="2">
    <location>
        <begin position="202"/>
        <end position="254"/>
    </location>
</feature>
<feature type="region of interest" description="Disordered" evidence="3">
    <location>
        <begin position="143"/>
        <end position="205"/>
    </location>
</feature>
<feature type="compositionally biased region" description="Polar residues" evidence="3">
    <location>
        <begin position="152"/>
        <end position="165"/>
    </location>
</feature>
<feature type="compositionally biased region" description="Acidic residues" evidence="3">
    <location>
        <begin position="184"/>
        <end position="200"/>
    </location>
</feature>
<feature type="site" description="Histone H3K4me3 binding" evidence="1">
    <location>
        <position position="218"/>
    </location>
</feature>
<feature type="site" description="Histone H3K4me3 binding" evidence="1">
    <location>
        <position position="222"/>
    </location>
</feature>
<feature type="site" description="Histone H3K4me3 binding" evidence="1">
    <location>
        <position position="227"/>
    </location>
</feature>
<evidence type="ECO:0000250" key="1"/>
<evidence type="ECO:0000255" key="2">
    <source>
        <dbReference type="PROSITE-ProRule" id="PRU00146"/>
    </source>
</evidence>
<evidence type="ECO:0000256" key="3">
    <source>
        <dbReference type="SAM" id="MobiDB-lite"/>
    </source>
</evidence>
<evidence type="ECO:0000305" key="4"/>
<organism>
    <name type="scientific">Oryza sativa subsp. indica</name>
    <name type="common">Rice</name>
    <dbReference type="NCBI Taxonomy" id="39946"/>
    <lineage>
        <taxon>Eukaryota</taxon>
        <taxon>Viridiplantae</taxon>
        <taxon>Streptophyta</taxon>
        <taxon>Embryophyta</taxon>
        <taxon>Tracheophyta</taxon>
        <taxon>Spermatophyta</taxon>
        <taxon>Magnoliopsida</taxon>
        <taxon>Liliopsida</taxon>
        <taxon>Poales</taxon>
        <taxon>Poaceae</taxon>
        <taxon>BOP clade</taxon>
        <taxon>Oryzoideae</taxon>
        <taxon>Oryzeae</taxon>
        <taxon>Oryzinae</taxon>
        <taxon>Oryza</taxon>
        <taxon>Oryza sativa</taxon>
    </lineage>
</organism>